<keyword id="KW-0167">Capsid protein</keyword>
<keyword id="KW-1165">Clathrin-mediated endocytosis of virus by host</keyword>
<keyword id="KW-0903">Direct protein sequencing</keyword>
<keyword id="KW-0945">Host-virus interaction</keyword>
<keyword id="KW-1153">Inner capsid protein</keyword>
<keyword id="KW-1161">Viral attachment to host cell</keyword>
<keyword id="KW-1162">Viral penetration into host cytoplasm</keyword>
<keyword id="KW-0946">Virion</keyword>
<keyword id="KW-1164">Virus endocytosis by host</keyword>
<keyword id="KW-1160">Virus entry into host cell</keyword>
<accession>P32508</accession>
<evidence type="ECO:0000269" key="1">
    <source>
    </source>
</evidence>
<evidence type="ECO:0000269" key="2">
    <source>
    </source>
</evidence>
<evidence type="ECO:0000305" key="3"/>
<protein>
    <recommendedName>
        <fullName>Outer capsid protein VP2</fullName>
    </recommendedName>
</protein>
<comment type="function">
    <text evidence="1 2">The VP2 protein is one of the two proteins (with VP5) target of the host immunogenic response. Responsible for viral which constitute the virus particle outer capsid. It is the major attachment to target host cell, probably by binding to sialic acid. This attachment induces virion internalization predominantly through clathrin-dependent endocytosis.</text>
</comment>
<comment type="subcellular location">
    <subcellularLocation>
        <location evidence="3">Virion</location>
    </subcellularLocation>
</comment>
<comment type="similarity">
    <text evidence="3">Belongs to the orbivirus VP2 family.</text>
</comment>
<dbReference type="PIR" id="A60014">
    <property type="entry name" value="P2XRSA"/>
</dbReference>
<dbReference type="SMR" id="P32508"/>
<dbReference type="DIP" id="DIP-59518N"/>
<dbReference type="IntAct" id="P32508">
    <property type="interactions" value="3"/>
</dbReference>
<dbReference type="GO" id="GO:0039625">
    <property type="term" value="C:viral inner capsid"/>
    <property type="evidence" value="ECO:0007669"/>
    <property type="project" value="UniProtKB-KW"/>
</dbReference>
<dbReference type="GO" id="GO:0005198">
    <property type="term" value="F:structural molecule activity"/>
    <property type="evidence" value="ECO:0007669"/>
    <property type="project" value="InterPro"/>
</dbReference>
<dbReference type="GO" id="GO:0075512">
    <property type="term" value="P:clathrin-dependent endocytosis of virus by host cell"/>
    <property type="evidence" value="ECO:0007669"/>
    <property type="project" value="UniProtKB-KW"/>
</dbReference>
<dbReference type="GO" id="GO:0019062">
    <property type="term" value="P:virion attachment to host cell"/>
    <property type="evidence" value="ECO:0007669"/>
    <property type="project" value="UniProtKB-KW"/>
</dbReference>
<dbReference type="InterPro" id="IPR001742">
    <property type="entry name" value="Capsid_VP2_Orbivir"/>
</dbReference>
<dbReference type="Pfam" id="PF00898">
    <property type="entry name" value="Orbi_VP2"/>
    <property type="match status" value="1"/>
</dbReference>
<feature type="chain" id="PRO_0000222681" description="Outer capsid protein VP2">
    <location>
        <begin position="1"/>
        <end position="961"/>
    </location>
</feature>
<organism>
    <name type="scientific">Bluetongue virus 1 (isolate South Africa)</name>
    <name type="common">BTV 1</name>
    <dbReference type="NCBI Taxonomy" id="10905"/>
    <lineage>
        <taxon>Viruses</taxon>
        <taxon>Riboviria</taxon>
        <taxon>Orthornavirae</taxon>
        <taxon>Duplornaviricota</taxon>
        <taxon>Resentoviricetes</taxon>
        <taxon>Reovirales</taxon>
        <taxon>Sedoreoviridae</taxon>
        <taxon>Orbivirus</taxon>
        <taxon>Bluetongue virus</taxon>
    </lineage>
</organism>
<name>VP2_BTV1S</name>
<reference key="1">
    <citation type="journal article" date="1990" name="Virus Res.">
        <title>Expression of the outer capsid protein, VP2, from a full length cDNA clone of genome segment 2 of bluetongue serotype 1 from South Africa, using both Sp6 and vaccinia expression systems and a comparison of the nucleic acid sequence of this segment with those of other serotypes.</title>
        <authorList>
            <person name="Wade-Evans A.M."/>
            <person name="Mertens P.P.C."/>
        </authorList>
    </citation>
    <scope>NUCLEOTIDE SEQUENCE</scope>
    <scope>PROTEIN SEQUENCE OF 322-346 AND 492-503</scope>
</reference>
<reference key="2">
    <citation type="journal article" date="2010" name="Proc. Natl. Acad. Sci. U.S.A.">
        <title>Bluetongue virus coat protein VP2 contains sialic acid-binding domains, and VP5 resembles enveloped virus fusion proteins.</title>
        <authorList>
            <person name="Zhang X."/>
            <person name="Boyce M."/>
            <person name="Bhattacharya B."/>
            <person name="Zhang X."/>
            <person name="Schein S."/>
            <person name="Roy P."/>
            <person name="Zhou Z.H."/>
        </authorList>
    </citation>
    <scope>FUNCTION</scope>
</reference>
<reference key="3">
    <citation type="journal article" date="2007" name="J. Virol.">
        <title>Bluetongue virus entry into cells.</title>
        <authorList>
            <person name="Forzan M."/>
            <person name="Marsh M."/>
            <person name="Roy P."/>
        </authorList>
    </citation>
    <scope>FUNCTION</scope>
</reference>
<proteinExistence type="evidence at protein level"/>
<gene>
    <name type="primary">Segment-2</name>
</gene>
<sequence length="961" mass="111937">MDELGIPVYKRGFPEHLLRGYEFIIDVGTKIESVGGRHDVTKIPEMNAYDIKQESIRTALWYNPIRNDGFVLPRVLDITLRGYDERRAVVESTRHKSFHTNDQWVQWMMKDSMDAQPLKVGLDTQVWNVAHSLHNSVVEIDSKKADTMAYHVEPIEDASKGCLHTRTMMWNHLVRIETFHAAQEVHILFKPTYDIVVHAERRDRSQPFRPGDQTLINFGRGQKVAMNHNSYDKMVEGLTHLVIRGKTPEVIRDDIASLDEICNRWIQSRHDPGEIKAYELCKYLSTIGRKSLDREKEPEDEANLSIRFQEAIDNKFRQHDPERLKIFEHRNQRRDEDRFYILLMIAGSDTFNTRVWWSNPYPCLRRKLIASETKLGDVYSMMRSWYDWSVRPTYAPYEKTREQEKYIYGRVNLFDFVAEPGIKIIHWEYKLNHSTREITYAQGNPCDYYPEDDDVIVTKFDDVAYGQMINEMINGGWNQEQFKMHKILKSEGNVLTIDFEKDAKLTTNEGVTMPEYFNKWIIAPMFNAKLRIKHEEIAQRQSDDPMVKRTLSPIAADPIVLQRLTLARFYDIRPALIGQGLSRQQAQSTYDEEISKQAGYAEILKRRGIVQIPKKPCPTVTAQYTLELYSLSLINILQQHVARDCDEEAIYEHPKADYELEIFGESIVDISQVIVLVFDLIFERRRRVRDVYESRYIITRIRRMRGKERLNVIAEFFPTYGSLLNGLNSAYVVQDIMYLNFLPLYFLAGDNMIYSHRQWSIPLLLYTHEVMVIPLEVGSYNDRCGLIAYLEYMVFFPSKAIRLSKLNEAHAKIAREMLKYYANTTVYDGGDNSNVVTTKQLLYETYLASLCGGFLDGIVWYLPITHPKKCIVAIEVSDERVPASIRAGRIRLRFPLSSRHLKGSAIIQIDLVGRFTVYSEGIVSFLVCKKNLLKYKCEIILLKFSGHVFGNDEMLTKLLNV</sequence>
<organismHost>
    <name type="scientific">Antilocapra americana</name>
    <name type="common">Pronghorn</name>
    <dbReference type="NCBI Taxonomy" id="9891"/>
</organismHost>
<organismHost>
    <name type="scientific">Bos taurus</name>
    <name type="common">Bovine</name>
    <dbReference type="NCBI Taxonomy" id="9913"/>
</organismHost>
<organismHost>
    <name type="scientific">Capra hircus</name>
    <name type="common">Goat</name>
    <dbReference type="NCBI Taxonomy" id="9925"/>
</organismHost>
<organismHost>
    <name type="scientific">Culicoides variipennis</name>
    <name type="common">Biting midge</name>
    <dbReference type="NCBI Taxonomy" id="46212"/>
</organismHost>
<organismHost>
    <name type="scientific">Ovis aries</name>
    <name type="common">Sheep</name>
    <dbReference type="NCBI Taxonomy" id="9940"/>
</organismHost>